<reference key="1">
    <citation type="journal article" date="2005" name="Science">
        <title>The transcriptional landscape of the mammalian genome.</title>
        <authorList>
            <person name="Carninci P."/>
            <person name="Kasukawa T."/>
            <person name="Katayama S."/>
            <person name="Gough J."/>
            <person name="Frith M.C."/>
            <person name="Maeda N."/>
            <person name="Oyama R."/>
            <person name="Ravasi T."/>
            <person name="Lenhard B."/>
            <person name="Wells C."/>
            <person name="Kodzius R."/>
            <person name="Shimokawa K."/>
            <person name="Bajic V.B."/>
            <person name="Brenner S.E."/>
            <person name="Batalov S."/>
            <person name="Forrest A.R."/>
            <person name="Zavolan M."/>
            <person name="Davis M.J."/>
            <person name="Wilming L.G."/>
            <person name="Aidinis V."/>
            <person name="Allen J.E."/>
            <person name="Ambesi-Impiombato A."/>
            <person name="Apweiler R."/>
            <person name="Aturaliya R.N."/>
            <person name="Bailey T.L."/>
            <person name="Bansal M."/>
            <person name="Baxter L."/>
            <person name="Beisel K.W."/>
            <person name="Bersano T."/>
            <person name="Bono H."/>
            <person name="Chalk A.M."/>
            <person name="Chiu K.P."/>
            <person name="Choudhary V."/>
            <person name="Christoffels A."/>
            <person name="Clutterbuck D.R."/>
            <person name="Crowe M.L."/>
            <person name="Dalla E."/>
            <person name="Dalrymple B.P."/>
            <person name="de Bono B."/>
            <person name="Della Gatta G."/>
            <person name="di Bernardo D."/>
            <person name="Down T."/>
            <person name="Engstrom P."/>
            <person name="Fagiolini M."/>
            <person name="Faulkner G."/>
            <person name="Fletcher C.F."/>
            <person name="Fukushima T."/>
            <person name="Furuno M."/>
            <person name="Futaki S."/>
            <person name="Gariboldi M."/>
            <person name="Georgii-Hemming P."/>
            <person name="Gingeras T.R."/>
            <person name="Gojobori T."/>
            <person name="Green R.E."/>
            <person name="Gustincich S."/>
            <person name="Harbers M."/>
            <person name="Hayashi Y."/>
            <person name="Hensch T.K."/>
            <person name="Hirokawa N."/>
            <person name="Hill D."/>
            <person name="Huminiecki L."/>
            <person name="Iacono M."/>
            <person name="Ikeo K."/>
            <person name="Iwama A."/>
            <person name="Ishikawa T."/>
            <person name="Jakt M."/>
            <person name="Kanapin A."/>
            <person name="Katoh M."/>
            <person name="Kawasawa Y."/>
            <person name="Kelso J."/>
            <person name="Kitamura H."/>
            <person name="Kitano H."/>
            <person name="Kollias G."/>
            <person name="Krishnan S.P."/>
            <person name="Kruger A."/>
            <person name="Kummerfeld S.K."/>
            <person name="Kurochkin I.V."/>
            <person name="Lareau L.F."/>
            <person name="Lazarevic D."/>
            <person name="Lipovich L."/>
            <person name="Liu J."/>
            <person name="Liuni S."/>
            <person name="McWilliam S."/>
            <person name="Madan Babu M."/>
            <person name="Madera M."/>
            <person name="Marchionni L."/>
            <person name="Matsuda H."/>
            <person name="Matsuzawa S."/>
            <person name="Miki H."/>
            <person name="Mignone F."/>
            <person name="Miyake S."/>
            <person name="Morris K."/>
            <person name="Mottagui-Tabar S."/>
            <person name="Mulder N."/>
            <person name="Nakano N."/>
            <person name="Nakauchi H."/>
            <person name="Ng P."/>
            <person name="Nilsson R."/>
            <person name="Nishiguchi S."/>
            <person name="Nishikawa S."/>
            <person name="Nori F."/>
            <person name="Ohara O."/>
            <person name="Okazaki Y."/>
            <person name="Orlando V."/>
            <person name="Pang K.C."/>
            <person name="Pavan W.J."/>
            <person name="Pavesi G."/>
            <person name="Pesole G."/>
            <person name="Petrovsky N."/>
            <person name="Piazza S."/>
            <person name="Reed J."/>
            <person name="Reid J.F."/>
            <person name="Ring B.Z."/>
            <person name="Ringwald M."/>
            <person name="Rost B."/>
            <person name="Ruan Y."/>
            <person name="Salzberg S.L."/>
            <person name="Sandelin A."/>
            <person name="Schneider C."/>
            <person name="Schoenbach C."/>
            <person name="Sekiguchi K."/>
            <person name="Semple C.A."/>
            <person name="Seno S."/>
            <person name="Sessa L."/>
            <person name="Sheng Y."/>
            <person name="Shibata Y."/>
            <person name="Shimada H."/>
            <person name="Shimada K."/>
            <person name="Silva D."/>
            <person name="Sinclair B."/>
            <person name="Sperling S."/>
            <person name="Stupka E."/>
            <person name="Sugiura K."/>
            <person name="Sultana R."/>
            <person name="Takenaka Y."/>
            <person name="Taki K."/>
            <person name="Tammoja K."/>
            <person name="Tan S.L."/>
            <person name="Tang S."/>
            <person name="Taylor M.S."/>
            <person name="Tegner J."/>
            <person name="Teichmann S.A."/>
            <person name="Ueda H.R."/>
            <person name="van Nimwegen E."/>
            <person name="Verardo R."/>
            <person name="Wei C.L."/>
            <person name="Yagi K."/>
            <person name="Yamanishi H."/>
            <person name="Zabarovsky E."/>
            <person name="Zhu S."/>
            <person name="Zimmer A."/>
            <person name="Hide W."/>
            <person name="Bult C."/>
            <person name="Grimmond S.M."/>
            <person name="Teasdale R.D."/>
            <person name="Liu E.T."/>
            <person name="Brusic V."/>
            <person name="Quackenbush J."/>
            <person name="Wahlestedt C."/>
            <person name="Mattick J.S."/>
            <person name="Hume D.A."/>
            <person name="Kai C."/>
            <person name="Sasaki D."/>
            <person name="Tomaru Y."/>
            <person name="Fukuda S."/>
            <person name="Kanamori-Katayama M."/>
            <person name="Suzuki M."/>
            <person name="Aoki J."/>
            <person name="Arakawa T."/>
            <person name="Iida J."/>
            <person name="Imamura K."/>
            <person name="Itoh M."/>
            <person name="Kato T."/>
            <person name="Kawaji H."/>
            <person name="Kawagashira N."/>
            <person name="Kawashima T."/>
            <person name="Kojima M."/>
            <person name="Kondo S."/>
            <person name="Konno H."/>
            <person name="Nakano K."/>
            <person name="Ninomiya N."/>
            <person name="Nishio T."/>
            <person name="Okada M."/>
            <person name="Plessy C."/>
            <person name="Shibata K."/>
            <person name="Shiraki T."/>
            <person name="Suzuki S."/>
            <person name="Tagami M."/>
            <person name="Waki K."/>
            <person name="Watahiki A."/>
            <person name="Okamura-Oho Y."/>
            <person name="Suzuki H."/>
            <person name="Kawai J."/>
            <person name="Hayashizaki Y."/>
        </authorList>
    </citation>
    <scope>NUCLEOTIDE SEQUENCE [LARGE SCALE MRNA] (ISOFORMS 1 AND 2)</scope>
    <source>
        <strain>C57BL/6J</strain>
        <tissue>Bone marrow</tissue>
        <tissue>Cerebellum</tissue>
        <tissue>Lung</tissue>
        <tissue>Spinal ganglion</tissue>
        <tissue>Testis</tissue>
    </source>
</reference>
<reference key="2">
    <citation type="journal article" date="2004" name="Genome Res.">
        <title>The status, quality, and expansion of the NIH full-length cDNA project: the Mammalian Gene Collection (MGC).</title>
        <authorList>
            <consortium name="The MGC Project Team"/>
        </authorList>
    </citation>
    <scope>NUCLEOTIDE SEQUENCE [LARGE SCALE MRNA] (ISOFORM 1)</scope>
    <source>
        <strain>Czech II</strain>
        <tissue>Mammary tumor</tissue>
    </source>
</reference>
<protein>
    <recommendedName>
        <fullName>Cell death-inducing p53-target protein 1</fullName>
    </recommendedName>
    <alternativeName>
        <fullName>LITAF-like protein</fullName>
    </alternativeName>
</protein>
<feature type="chain" id="PRO_0000280337" description="Cell death-inducing p53-target protein 1">
    <location>
        <begin position="1"/>
        <end position="208"/>
    </location>
</feature>
<feature type="domain" description="LITAF" evidence="3">
    <location>
        <begin position="122"/>
        <end position="206"/>
    </location>
</feature>
<feature type="region of interest" description="Disordered" evidence="4">
    <location>
        <begin position="1"/>
        <end position="70"/>
    </location>
</feature>
<feature type="region of interest" description="Membrane-binding amphipathic helix" evidence="6">
    <location>
        <begin position="164"/>
        <end position="184"/>
    </location>
</feature>
<feature type="compositionally biased region" description="Pro residues" evidence="4">
    <location>
        <begin position="1"/>
        <end position="13"/>
    </location>
</feature>
<feature type="compositionally biased region" description="Pro residues" evidence="4">
    <location>
        <begin position="50"/>
        <end position="67"/>
    </location>
</feature>
<feature type="binding site" evidence="1">
    <location>
        <position position="142"/>
    </location>
    <ligand>
        <name>Zn(2+)</name>
        <dbReference type="ChEBI" id="CHEBI:29105"/>
    </ligand>
</feature>
<feature type="binding site" evidence="1">
    <location>
        <position position="145"/>
    </location>
    <ligand>
        <name>Zn(2+)</name>
        <dbReference type="ChEBI" id="CHEBI:29105"/>
    </ligand>
</feature>
<feature type="binding site" evidence="1">
    <location>
        <position position="194"/>
    </location>
    <ligand>
        <name>Zn(2+)</name>
        <dbReference type="ChEBI" id="CHEBI:29105"/>
    </ligand>
</feature>
<feature type="binding site" evidence="1">
    <location>
        <position position="197"/>
    </location>
    <ligand>
        <name>Zn(2+)</name>
        <dbReference type="ChEBI" id="CHEBI:29105"/>
    </ligand>
</feature>
<feature type="splice variant" id="VSP_023632" description="In isoform 2." evidence="5">
    <location>
        <begin position="81"/>
        <end position="97"/>
    </location>
</feature>
<feature type="sequence conflict" description="In Ref. 1; BAE29388." evidence="6" ref="1">
    <original>H</original>
    <variation>R</variation>
    <location>
        <position position="70"/>
    </location>
</feature>
<feature type="sequence conflict" description="In Ref. 1; BAB30764." evidence="6" ref="1">
    <original>I</original>
    <variation>V</variation>
    <location>
        <position position="180"/>
    </location>
</feature>
<dbReference type="EMBL" id="AK005157">
    <property type="protein sequence ID" value="BAB23848.1"/>
    <property type="molecule type" value="mRNA"/>
</dbReference>
<dbReference type="EMBL" id="AK017480">
    <property type="protein sequence ID" value="BAB30764.1"/>
    <property type="molecule type" value="mRNA"/>
</dbReference>
<dbReference type="EMBL" id="AK031705">
    <property type="protein sequence ID" value="BAC27523.1"/>
    <property type="molecule type" value="mRNA"/>
</dbReference>
<dbReference type="EMBL" id="AK051560">
    <property type="protein sequence ID" value="BAC34673.1"/>
    <property type="molecule type" value="mRNA"/>
</dbReference>
<dbReference type="EMBL" id="AK149939">
    <property type="protein sequence ID" value="BAE29181.1"/>
    <property type="molecule type" value="mRNA"/>
</dbReference>
<dbReference type="EMBL" id="AK150219">
    <property type="protein sequence ID" value="BAE29388.1"/>
    <property type="molecule type" value="mRNA"/>
</dbReference>
<dbReference type="EMBL" id="AK166141">
    <property type="protein sequence ID" value="BAE38594.1"/>
    <property type="molecule type" value="mRNA"/>
</dbReference>
<dbReference type="EMBL" id="BC004063">
    <property type="protein sequence ID" value="AAH04063.1"/>
    <property type="molecule type" value="mRNA"/>
</dbReference>
<dbReference type="CCDS" id="CCDS27925.1">
    <molecule id="Q9DB75-1"/>
</dbReference>
<dbReference type="CCDS" id="CCDS88867.1">
    <molecule id="Q9DB75-2"/>
</dbReference>
<dbReference type="RefSeq" id="NP_001345007.1">
    <molecule id="Q9DB75-1"/>
    <property type="nucleotide sequence ID" value="NM_001358078.1"/>
</dbReference>
<dbReference type="RefSeq" id="NP_001345010.1">
    <molecule id="Q9DB75-2"/>
    <property type="nucleotide sequence ID" value="NM_001358081.2"/>
</dbReference>
<dbReference type="RefSeq" id="NP_001345011.1">
    <molecule id="Q9DB75-1"/>
    <property type="nucleotide sequence ID" value="NM_001358082.2"/>
</dbReference>
<dbReference type="RefSeq" id="NP_079946.2">
    <molecule id="Q9DB75-1"/>
    <property type="nucleotide sequence ID" value="NM_025670.4"/>
</dbReference>
<dbReference type="RefSeq" id="XP_006522530.1">
    <property type="nucleotide sequence ID" value="XM_006522467.1"/>
</dbReference>
<dbReference type="RefSeq" id="XP_006522531.1">
    <molecule id="Q9DB75-1"/>
    <property type="nucleotide sequence ID" value="XM_006522468.1"/>
</dbReference>
<dbReference type="RefSeq" id="XP_011244298.1">
    <property type="nucleotide sequence ID" value="XM_011245996.2"/>
</dbReference>
<dbReference type="RefSeq" id="XP_030105099.1">
    <molecule id="Q9DB75-1"/>
    <property type="nucleotide sequence ID" value="XM_030249239.1"/>
</dbReference>
<dbReference type="RefSeq" id="XP_030105100.1">
    <molecule id="Q9DB75-1"/>
    <property type="nucleotide sequence ID" value="XM_030249240.1"/>
</dbReference>
<dbReference type="FunCoup" id="Q9DB75">
    <property type="interactions" value="350"/>
</dbReference>
<dbReference type="IntAct" id="Q9DB75">
    <property type="interactions" value="1"/>
</dbReference>
<dbReference type="STRING" id="10090.ENSMUSP00000004173"/>
<dbReference type="GlyGen" id="Q9DB75">
    <property type="glycosylation" value="1 site"/>
</dbReference>
<dbReference type="iPTMnet" id="Q9DB75"/>
<dbReference type="PhosphoSitePlus" id="Q9DB75"/>
<dbReference type="SwissPalm" id="Q9DB75"/>
<dbReference type="PaxDb" id="10090-ENSMUSP00000004173"/>
<dbReference type="PeptideAtlas" id="Q9DB75"/>
<dbReference type="ProteomicsDB" id="281284">
    <molecule id="Q9DB75-1"/>
</dbReference>
<dbReference type="ProteomicsDB" id="281285">
    <molecule id="Q9DB75-2"/>
</dbReference>
<dbReference type="Antibodypedia" id="24347">
    <property type="antibodies" value="74 antibodies from 21 providers"/>
</dbReference>
<dbReference type="DNASU" id="66626"/>
<dbReference type="Ensembl" id="ENSMUST00000004173.12">
    <molecule id="Q9DB75-1"/>
    <property type="protein sequence ID" value="ENSMUSP00000004173.6"/>
    <property type="gene ID" value="ENSMUSG00000004071.14"/>
</dbReference>
<dbReference type="Ensembl" id="ENSMUST00000117713.8">
    <molecule id="Q9DB75-2"/>
    <property type="protein sequence ID" value="ENSMUSP00000113618.2"/>
    <property type="gene ID" value="ENSMUSG00000004071.14"/>
</dbReference>
<dbReference type="Ensembl" id="ENSMUST00000118703.8">
    <molecule id="Q9DB75-1"/>
    <property type="protein sequence ID" value="ENSMUSP00000113889.2"/>
    <property type="gene ID" value="ENSMUSG00000004071.14"/>
</dbReference>
<dbReference type="GeneID" id="66626"/>
<dbReference type="KEGG" id="mmu:66626"/>
<dbReference type="UCSC" id="uc007yaj.1">
    <molecule id="Q9DB75-1"/>
    <property type="organism name" value="mouse"/>
</dbReference>
<dbReference type="UCSC" id="uc012aau.1">
    <molecule id="Q9DB75-2"/>
    <property type="organism name" value="mouse"/>
</dbReference>
<dbReference type="AGR" id="MGI:1913876"/>
<dbReference type="CTD" id="29965"/>
<dbReference type="MGI" id="MGI:1913876">
    <property type="gene designation" value="Cdip1"/>
</dbReference>
<dbReference type="VEuPathDB" id="HostDB:ENSMUSG00000004071"/>
<dbReference type="eggNOG" id="ENOG502S2GM">
    <property type="taxonomic scope" value="Eukaryota"/>
</dbReference>
<dbReference type="GeneTree" id="ENSGT00940000157696"/>
<dbReference type="HOGENOM" id="CLU_095549_0_0_1"/>
<dbReference type="InParanoid" id="Q9DB75"/>
<dbReference type="OMA" id="YTYKRVC"/>
<dbReference type="OrthoDB" id="5599753at2759"/>
<dbReference type="PhylomeDB" id="Q9DB75"/>
<dbReference type="TreeFam" id="TF313294"/>
<dbReference type="BioGRID-ORCS" id="66626">
    <property type="hits" value="2 hits in 76 CRISPR screens"/>
</dbReference>
<dbReference type="ChiTaRS" id="Cdip1">
    <property type="organism name" value="mouse"/>
</dbReference>
<dbReference type="PRO" id="PR:Q9DB75"/>
<dbReference type="Proteomes" id="UP000000589">
    <property type="component" value="Chromosome 16"/>
</dbReference>
<dbReference type="RNAct" id="Q9DB75">
    <property type="molecule type" value="protein"/>
</dbReference>
<dbReference type="Bgee" id="ENSMUSG00000004071">
    <property type="expression patterns" value="Expressed in dentate gyrus of hippocampal formation granule cell and 265 other cell types or tissues"/>
</dbReference>
<dbReference type="ExpressionAtlas" id="Q9DB75">
    <property type="expression patterns" value="baseline and differential"/>
</dbReference>
<dbReference type="GO" id="GO:0098560">
    <property type="term" value="C:cytoplasmic side of late endosome membrane"/>
    <property type="evidence" value="ECO:0000250"/>
    <property type="project" value="UniProtKB"/>
</dbReference>
<dbReference type="GO" id="GO:0098574">
    <property type="term" value="C:cytoplasmic side of lysosomal membrane"/>
    <property type="evidence" value="ECO:0000250"/>
    <property type="project" value="UniProtKB"/>
</dbReference>
<dbReference type="GO" id="GO:0005634">
    <property type="term" value="C:nucleus"/>
    <property type="evidence" value="ECO:0000266"/>
    <property type="project" value="MGI"/>
</dbReference>
<dbReference type="GO" id="GO:0046872">
    <property type="term" value="F:metal ion binding"/>
    <property type="evidence" value="ECO:0007669"/>
    <property type="project" value="UniProtKB-KW"/>
</dbReference>
<dbReference type="GO" id="GO:0006915">
    <property type="term" value="P:apoptotic process"/>
    <property type="evidence" value="ECO:0000266"/>
    <property type="project" value="MGI"/>
</dbReference>
<dbReference type="GO" id="GO:0042771">
    <property type="term" value="P:intrinsic apoptotic signaling pathway in response to DNA damage by p53 class mediator"/>
    <property type="evidence" value="ECO:0000266"/>
    <property type="project" value="MGI"/>
</dbReference>
<dbReference type="GO" id="GO:0033209">
    <property type="term" value="P:tumor necrosis factor-mediated signaling pathway"/>
    <property type="evidence" value="ECO:0000266"/>
    <property type="project" value="MGI"/>
</dbReference>
<dbReference type="InterPro" id="IPR006629">
    <property type="entry name" value="LITAF"/>
</dbReference>
<dbReference type="InterPro" id="IPR037519">
    <property type="entry name" value="LITAF_fam"/>
</dbReference>
<dbReference type="PANTHER" id="PTHR23292:SF7">
    <property type="entry name" value="CELL DEATH-INDUCING P53-TARGET PROTEIN 1"/>
    <property type="match status" value="1"/>
</dbReference>
<dbReference type="PANTHER" id="PTHR23292">
    <property type="entry name" value="LIPOPOLYSACCHARIDE-INDUCED TUMOR NECROSIS FACTOR-ALPHA FACTOR"/>
    <property type="match status" value="1"/>
</dbReference>
<dbReference type="Pfam" id="PF10601">
    <property type="entry name" value="zf-LITAF-like"/>
    <property type="match status" value="1"/>
</dbReference>
<dbReference type="SMART" id="SM00714">
    <property type="entry name" value="LITAF"/>
    <property type="match status" value="1"/>
</dbReference>
<dbReference type="PROSITE" id="PS51837">
    <property type="entry name" value="LITAF"/>
    <property type="match status" value="1"/>
</dbReference>
<name>CDIP1_MOUSE</name>
<keyword id="KW-0025">Alternative splicing</keyword>
<keyword id="KW-0053">Apoptosis</keyword>
<keyword id="KW-0967">Endosome</keyword>
<keyword id="KW-0458">Lysosome</keyword>
<keyword id="KW-0472">Membrane</keyword>
<keyword id="KW-0479">Metal-binding</keyword>
<keyword id="KW-1185">Reference proteome</keyword>
<keyword id="KW-0862">Zinc</keyword>
<evidence type="ECO:0000250" key="1">
    <source>
        <dbReference type="UniProtKB" id="Q99732"/>
    </source>
</evidence>
<evidence type="ECO:0000250" key="2">
    <source>
        <dbReference type="UniProtKB" id="Q9H305"/>
    </source>
</evidence>
<evidence type="ECO:0000255" key="3">
    <source>
        <dbReference type="PROSITE-ProRule" id="PRU01181"/>
    </source>
</evidence>
<evidence type="ECO:0000256" key="4">
    <source>
        <dbReference type="SAM" id="MobiDB-lite"/>
    </source>
</evidence>
<evidence type="ECO:0000303" key="5">
    <source>
    </source>
</evidence>
<evidence type="ECO:0000305" key="6"/>
<accession>Q9DB75</accession>
<accession>Q3UD73</accession>
<accession>Q9CYP1</accession>
<sequence>MSNEPPPPYPGGPTAPLLEEKSGAPLTPGRTSPAVMQPPPGMPLPSADIAPPPYEPPGQPVPQPGFVPPHMNADGTYMPAGFYPPPGPHPPMGYYPPGPYPPGPYPGPGGHTATVLVPSGAATTVTVLQGEIFEGAPVQTVCPHCQQAITTKISYEIGLMNFVLGFFCCFMGCDLGCCLIPCLINDFKDVTHTCPSCKAYICTYKRLC</sequence>
<organism>
    <name type="scientific">Mus musculus</name>
    <name type="common">Mouse</name>
    <dbReference type="NCBI Taxonomy" id="10090"/>
    <lineage>
        <taxon>Eukaryota</taxon>
        <taxon>Metazoa</taxon>
        <taxon>Chordata</taxon>
        <taxon>Craniata</taxon>
        <taxon>Vertebrata</taxon>
        <taxon>Euteleostomi</taxon>
        <taxon>Mammalia</taxon>
        <taxon>Eutheria</taxon>
        <taxon>Euarchontoglires</taxon>
        <taxon>Glires</taxon>
        <taxon>Rodentia</taxon>
        <taxon>Myomorpha</taxon>
        <taxon>Muroidea</taxon>
        <taxon>Muridae</taxon>
        <taxon>Murinae</taxon>
        <taxon>Mus</taxon>
        <taxon>Mus</taxon>
    </lineage>
</organism>
<proteinExistence type="evidence at transcript level"/>
<comment type="function">
    <text evidence="2">Acts as an important p53/TP53-apoptotic effector. Regulates TNF-alpha-mediated apoptosis in a p53/TP53-dependent manner (By similarity).</text>
</comment>
<comment type="subcellular location">
    <subcellularLocation>
        <location evidence="2">Late endosome membrane</location>
        <topology evidence="2">Peripheral membrane protein</topology>
        <orientation evidence="2">Cytoplasmic side</orientation>
    </subcellularLocation>
    <subcellularLocation>
        <location evidence="2">Lysosome membrane</location>
        <topology evidence="2">Peripheral membrane protein</topology>
        <orientation evidence="2">Cytoplasmic side</orientation>
    </subcellularLocation>
</comment>
<comment type="alternative products">
    <event type="alternative splicing"/>
    <isoform>
        <id>Q9DB75-1</id>
        <name>1</name>
        <sequence type="displayed"/>
    </isoform>
    <isoform>
        <id>Q9DB75-2</id>
        <name>2</name>
        <sequence type="described" ref="VSP_023632"/>
    </isoform>
</comment>
<comment type="domain">
    <text evidence="1">The LITAF domain is stabilized by a bound zinc ion. The LITAF domain contains an amphipathic helix that mediates interaction with lipid membranes.</text>
</comment>
<comment type="similarity">
    <text evidence="6">Belongs to the CDIP1/LITAF family.</text>
</comment>
<gene>
    <name type="primary">Cdip1</name>
</gene>